<gene>
    <name evidence="1" type="primary">erpA</name>
    <name type="ordered locus">Smal_3701</name>
</gene>
<keyword id="KW-0408">Iron</keyword>
<keyword id="KW-0411">Iron-sulfur</keyword>
<keyword id="KW-0479">Metal-binding</keyword>
<comment type="function">
    <text evidence="1">Required for insertion of 4Fe-4S clusters for at least IspG.</text>
</comment>
<comment type="cofactor">
    <cofactor evidence="1">
        <name>iron-sulfur cluster</name>
        <dbReference type="ChEBI" id="CHEBI:30408"/>
    </cofactor>
    <text evidence="1">Binds 1 iron-sulfur cluster per subunit.</text>
</comment>
<comment type="subunit">
    <text evidence="1">Homodimer.</text>
</comment>
<comment type="similarity">
    <text evidence="1">Belongs to the HesB/IscA family.</text>
</comment>
<organism>
    <name type="scientific">Stenotrophomonas maltophilia (strain R551-3)</name>
    <dbReference type="NCBI Taxonomy" id="391008"/>
    <lineage>
        <taxon>Bacteria</taxon>
        <taxon>Pseudomonadati</taxon>
        <taxon>Pseudomonadota</taxon>
        <taxon>Gammaproteobacteria</taxon>
        <taxon>Lysobacterales</taxon>
        <taxon>Lysobacteraceae</taxon>
        <taxon>Stenotrophomonas</taxon>
        <taxon>Stenotrophomonas maltophilia group</taxon>
    </lineage>
</organism>
<accession>B4SLD1</accession>
<dbReference type="EMBL" id="CP001111">
    <property type="protein sequence ID" value="ACF53400.1"/>
    <property type="molecule type" value="Genomic_DNA"/>
</dbReference>
<dbReference type="RefSeq" id="WP_012512304.1">
    <property type="nucleotide sequence ID" value="NC_011071.1"/>
</dbReference>
<dbReference type="SMR" id="B4SLD1"/>
<dbReference type="STRING" id="391008.Smal_3701"/>
<dbReference type="KEGG" id="smt:Smal_3701"/>
<dbReference type="eggNOG" id="COG0316">
    <property type="taxonomic scope" value="Bacteria"/>
</dbReference>
<dbReference type="HOGENOM" id="CLU_069054_5_3_6"/>
<dbReference type="OrthoDB" id="9801228at2"/>
<dbReference type="Proteomes" id="UP000001867">
    <property type="component" value="Chromosome"/>
</dbReference>
<dbReference type="GO" id="GO:0005829">
    <property type="term" value="C:cytosol"/>
    <property type="evidence" value="ECO:0007669"/>
    <property type="project" value="TreeGrafter"/>
</dbReference>
<dbReference type="GO" id="GO:0051537">
    <property type="term" value="F:2 iron, 2 sulfur cluster binding"/>
    <property type="evidence" value="ECO:0007669"/>
    <property type="project" value="UniProtKB-ARBA"/>
</dbReference>
<dbReference type="GO" id="GO:0051539">
    <property type="term" value="F:4 iron, 4 sulfur cluster binding"/>
    <property type="evidence" value="ECO:0007669"/>
    <property type="project" value="TreeGrafter"/>
</dbReference>
<dbReference type="GO" id="GO:0005506">
    <property type="term" value="F:iron ion binding"/>
    <property type="evidence" value="ECO:0007669"/>
    <property type="project" value="UniProtKB-UniRule"/>
</dbReference>
<dbReference type="GO" id="GO:0016226">
    <property type="term" value="P:iron-sulfur cluster assembly"/>
    <property type="evidence" value="ECO:0007669"/>
    <property type="project" value="UniProtKB-UniRule"/>
</dbReference>
<dbReference type="FunFam" id="2.60.300.12:FF:000002">
    <property type="entry name" value="Iron-sulfur cluster insertion protein ErpA"/>
    <property type="match status" value="1"/>
</dbReference>
<dbReference type="Gene3D" id="2.60.300.12">
    <property type="entry name" value="HesB-like domain"/>
    <property type="match status" value="1"/>
</dbReference>
<dbReference type="HAMAP" id="MF_01380">
    <property type="entry name" value="Fe_S_insert_ErpA"/>
    <property type="match status" value="1"/>
</dbReference>
<dbReference type="InterPro" id="IPR000361">
    <property type="entry name" value="FeS_biogenesis"/>
</dbReference>
<dbReference type="InterPro" id="IPR016092">
    <property type="entry name" value="FeS_cluster_insertion"/>
</dbReference>
<dbReference type="InterPro" id="IPR017870">
    <property type="entry name" value="FeS_cluster_insertion_CS"/>
</dbReference>
<dbReference type="InterPro" id="IPR023063">
    <property type="entry name" value="FeS_cluster_insertion_RrpA"/>
</dbReference>
<dbReference type="InterPro" id="IPR035903">
    <property type="entry name" value="HesB-like_dom_sf"/>
</dbReference>
<dbReference type="NCBIfam" id="TIGR00049">
    <property type="entry name" value="iron-sulfur cluster assembly accessory protein"/>
    <property type="match status" value="1"/>
</dbReference>
<dbReference type="NCBIfam" id="NF010147">
    <property type="entry name" value="PRK13623.1"/>
    <property type="match status" value="1"/>
</dbReference>
<dbReference type="PANTHER" id="PTHR43011">
    <property type="entry name" value="IRON-SULFUR CLUSTER ASSEMBLY 2 HOMOLOG, MITOCHONDRIAL"/>
    <property type="match status" value="1"/>
</dbReference>
<dbReference type="PANTHER" id="PTHR43011:SF1">
    <property type="entry name" value="IRON-SULFUR CLUSTER ASSEMBLY 2 HOMOLOG, MITOCHONDRIAL"/>
    <property type="match status" value="1"/>
</dbReference>
<dbReference type="Pfam" id="PF01521">
    <property type="entry name" value="Fe-S_biosyn"/>
    <property type="match status" value="1"/>
</dbReference>
<dbReference type="SUPFAM" id="SSF89360">
    <property type="entry name" value="HesB-like domain"/>
    <property type="match status" value="1"/>
</dbReference>
<dbReference type="PROSITE" id="PS01152">
    <property type="entry name" value="HESB"/>
    <property type="match status" value="1"/>
</dbReference>
<proteinExistence type="inferred from homology"/>
<feature type="chain" id="PRO_1000144939" description="Iron-sulfur cluster insertion protein ErpA">
    <location>
        <begin position="1"/>
        <end position="130"/>
    </location>
</feature>
<feature type="binding site" evidence="1">
    <location>
        <position position="58"/>
    </location>
    <ligand>
        <name>iron-sulfur cluster</name>
        <dbReference type="ChEBI" id="CHEBI:30408"/>
    </ligand>
</feature>
<feature type="binding site" evidence="1">
    <location>
        <position position="122"/>
    </location>
    <ligand>
        <name>iron-sulfur cluster</name>
        <dbReference type="ChEBI" id="CHEBI:30408"/>
    </ligand>
</feature>
<feature type="binding site" evidence="1">
    <location>
        <position position="124"/>
    </location>
    <ligand>
        <name>iron-sulfur cluster</name>
        <dbReference type="ChEBI" id="CHEBI:30408"/>
    </ligand>
</feature>
<sequence length="130" mass="13870">MSTLVSLPGATPVAAPDYQSLERPLNFTESAAAKVKSLIQEEGNLDLALRVYIEGGGCSGFQYGFEFDENRAEDDLAVQTSGVTLLVDPLSLQYLMGAEVDYTESLTGAQFVIRNPNAKTTCGCGSSFSM</sequence>
<name>ERPA_STRM5</name>
<protein>
    <recommendedName>
        <fullName evidence="1">Iron-sulfur cluster insertion protein ErpA</fullName>
    </recommendedName>
</protein>
<reference key="1">
    <citation type="submission" date="2008-06" db="EMBL/GenBank/DDBJ databases">
        <title>Complete sequence of Stenotrophomonas maltophilia R551-3.</title>
        <authorList>
            <consortium name="US DOE Joint Genome Institute"/>
            <person name="Lucas S."/>
            <person name="Copeland A."/>
            <person name="Lapidus A."/>
            <person name="Glavina del Rio T."/>
            <person name="Dalin E."/>
            <person name="Tice H."/>
            <person name="Pitluck S."/>
            <person name="Chain P."/>
            <person name="Malfatti S."/>
            <person name="Shin M."/>
            <person name="Vergez L."/>
            <person name="Lang D."/>
            <person name="Schmutz J."/>
            <person name="Larimer F."/>
            <person name="Land M."/>
            <person name="Hauser L."/>
            <person name="Kyrpides N."/>
            <person name="Mikhailova N."/>
            <person name="Taghavi S."/>
            <person name="Monchy S."/>
            <person name="Newman L."/>
            <person name="Vangronsveld J."/>
            <person name="van der Lelie D."/>
            <person name="Richardson P."/>
        </authorList>
    </citation>
    <scope>NUCLEOTIDE SEQUENCE [LARGE SCALE GENOMIC DNA]</scope>
    <source>
        <strain>R551-3</strain>
    </source>
</reference>
<evidence type="ECO:0000255" key="1">
    <source>
        <dbReference type="HAMAP-Rule" id="MF_01380"/>
    </source>
</evidence>